<protein>
    <recommendedName>
        <fullName>Flagellin B</fullName>
    </recommendedName>
    <alternativeName>
        <fullName>Flagellin N</fullName>
    </alternativeName>
</protein>
<feature type="initiator methionine" description="Removed" evidence="1">
    <location>
        <position position="1"/>
    </location>
</feature>
<feature type="chain" id="PRO_0000182592" description="Flagellin B">
    <location>
        <begin position="2"/>
        <end position="573"/>
    </location>
</feature>
<feature type="sequence variant">
    <original>VQ</original>
    <variation>IE</variation>
    <location>
        <begin position="287"/>
        <end position="288"/>
    </location>
</feature>
<feature type="sequence variant">
    <original>A</original>
    <variation>R</variation>
    <location>
        <position position="302"/>
    </location>
</feature>
<feature type="sequence conflict" description="In Ref. 2; AAA23020." evidence="2" ref="2">
    <original>D</original>
    <variation>N</variation>
    <location>
        <position position="337"/>
    </location>
</feature>
<feature type="sequence conflict" description="In Ref. 2; AAA23020." evidence="2" ref="2">
    <original>R</original>
    <variation>A</variation>
    <location>
        <position position="437"/>
    </location>
</feature>
<feature type="sequence conflict" description="In Ref. 2; AAA23020." evidence="2" ref="2">
    <original>L</original>
    <variation>S</variation>
    <location>
        <position position="497"/>
    </location>
</feature>
<gene>
    <name type="primary">flaB</name>
</gene>
<dbReference type="EMBL" id="M64670">
    <property type="protein sequence ID" value="AAA23023.1"/>
    <property type="molecule type" value="Genomic_DNA"/>
</dbReference>
<dbReference type="EMBL" id="M64671">
    <property type="protein sequence ID" value="AAA23027.1"/>
    <property type="molecule type" value="Genomic_DNA"/>
</dbReference>
<dbReference type="EMBL" id="M35141">
    <property type="protein sequence ID" value="AAA23020.1"/>
    <property type="molecule type" value="Genomic_DNA"/>
</dbReference>
<dbReference type="PIR" id="A35146">
    <property type="entry name" value="A35146"/>
</dbReference>
<dbReference type="PIR" id="B42474">
    <property type="entry name" value="B42474"/>
</dbReference>
<dbReference type="SMR" id="P18245"/>
<dbReference type="STRING" id="195.ATE51_00888"/>
<dbReference type="eggNOG" id="COG1344">
    <property type="taxonomic scope" value="Bacteria"/>
</dbReference>
<dbReference type="GO" id="GO:0009288">
    <property type="term" value="C:bacterial-type flagellum"/>
    <property type="evidence" value="ECO:0007669"/>
    <property type="project" value="UniProtKB-SubCell"/>
</dbReference>
<dbReference type="GO" id="GO:0005576">
    <property type="term" value="C:extracellular region"/>
    <property type="evidence" value="ECO:0007669"/>
    <property type="project" value="UniProtKB-SubCell"/>
</dbReference>
<dbReference type="GO" id="GO:0005198">
    <property type="term" value="F:structural molecule activity"/>
    <property type="evidence" value="ECO:0007669"/>
    <property type="project" value="InterPro"/>
</dbReference>
<dbReference type="Gene3D" id="3.30.70.2120">
    <property type="match status" value="1"/>
</dbReference>
<dbReference type="Gene3D" id="1.20.1330.10">
    <property type="entry name" value="f41 fragment of flagellin, N-terminal domain"/>
    <property type="match status" value="2"/>
</dbReference>
<dbReference type="Gene3D" id="6.10.10.10">
    <property type="entry name" value="Flagellar export chaperone, C-terminal domain"/>
    <property type="match status" value="1"/>
</dbReference>
<dbReference type="InterPro" id="IPR001492">
    <property type="entry name" value="Flagellin"/>
</dbReference>
<dbReference type="InterPro" id="IPR046358">
    <property type="entry name" value="Flagellin_C"/>
</dbReference>
<dbReference type="InterPro" id="IPR042187">
    <property type="entry name" value="Flagellin_C_sub2"/>
</dbReference>
<dbReference type="InterPro" id="IPR010810">
    <property type="entry name" value="Flagellin_hook_IN_motif"/>
</dbReference>
<dbReference type="InterPro" id="IPR001029">
    <property type="entry name" value="Flagellin_N"/>
</dbReference>
<dbReference type="NCBIfam" id="NF006264">
    <property type="entry name" value="PRK08411.1"/>
    <property type="match status" value="1"/>
</dbReference>
<dbReference type="NCBIfam" id="NF010116">
    <property type="entry name" value="PRK13589.1"/>
    <property type="match status" value="1"/>
</dbReference>
<dbReference type="PANTHER" id="PTHR42792">
    <property type="entry name" value="FLAGELLIN"/>
    <property type="match status" value="1"/>
</dbReference>
<dbReference type="PANTHER" id="PTHR42792:SF2">
    <property type="entry name" value="FLAGELLIN"/>
    <property type="match status" value="1"/>
</dbReference>
<dbReference type="Pfam" id="PF00700">
    <property type="entry name" value="Flagellin_C"/>
    <property type="match status" value="1"/>
</dbReference>
<dbReference type="Pfam" id="PF07196">
    <property type="entry name" value="Flagellin_IN"/>
    <property type="match status" value="2"/>
</dbReference>
<dbReference type="Pfam" id="PF00669">
    <property type="entry name" value="Flagellin_N"/>
    <property type="match status" value="1"/>
</dbReference>
<dbReference type="PRINTS" id="PR00207">
    <property type="entry name" value="FLAGELLIN"/>
</dbReference>
<dbReference type="SUPFAM" id="SSF64518">
    <property type="entry name" value="Phase 1 flagellin"/>
    <property type="match status" value="1"/>
</dbReference>
<organism>
    <name type="scientific">Campylobacter coli</name>
    <dbReference type="NCBI Taxonomy" id="195"/>
    <lineage>
        <taxon>Bacteria</taxon>
        <taxon>Pseudomonadati</taxon>
        <taxon>Campylobacterota</taxon>
        <taxon>Epsilonproteobacteria</taxon>
        <taxon>Campylobacterales</taxon>
        <taxon>Campylobacteraceae</taxon>
        <taxon>Campylobacter</taxon>
    </lineage>
</organism>
<sequence>MGFRINTNIGALNAHANSVVNARELDKSLSRLSSGLRINSAADDASGMAIADSLRSQAATLGQAINNGNDAIGILQTADKAMDEQLKILDTIKTKATQAAQDGQSLKTRTMLQADINRLMEELDNIANTTSFNGKQLLSGGFTNQEFQIGSSSNQTIKASIGATQSSKIGVTRFETGSQSFSSGTVGLTIKNYNGIEDFKFDSVVISTSVGTGLGALAEEINRNADKTGIRATFDVKSVGAYAIKAGNTSQDFAINGVVIGQINYNDGDNNGQLISAINAVKDTTGVQASKDENGKLVLTSADGRGIKITGSIGVGAGILHTENYGRLSLVKNDGRDINISGTGLSAIGMGATDMISQSSVSLRESKGQISAANADAMGFNAYNGGGAKQIIFASSIAGFMSQAGSGFSAGSGFSVGSGKNYSAILSASIQIVSSARSISSTYVVSTGSGFSAGSGNSQFAALRISTVSAHDETAGVTTLKGAMAVMDIAETAITNLDQIRADIGAVQNQLQVTINNITVTQVNVKAAESTIRDVDFAAESANFSKYNILAQSGSYAMSQRNAVQQNVLKLLQ</sequence>
<name>FLAB_CAMCO</name>
<comment type="function">
    <text>Flagellin is the subunit protein which polymerizes to form the filaments of bacterial flagella.</text>
</comment>
<comment type="subunit">
    <text>Heteromer of FlaA and FlaB. A flagellar filament composed exclusively of FlaA is indistinguishable in length from that of the wild-type and shows a slight reduction in motility. The flagellar filament composed exclusively of the FlaB is severely truncated in length and greatly reduced in motility. Thus, while both flagellins are not necessary for motility, both are required for a fully active flagellar filament.</text>
</comment>
<comment type="subcellular location">
    <subcellularLocation>
        <location>Secreted</location>
    </subcellularLocation>
    <subcellularLocation>
        <location>Bacterial flagellum</location>
    </subcellularLocation>
</comment>
<comment type="similarity">
    <text evidence="2">Belongs to the bacterial flagellin family.</text>
</comment>
<accession>P18245</accession>
<reference key="1">
    <citation type="journal article" date="1991" name="J. Bacteriol.">
        <title>Role of two flagellin genes in Campylobacter motility.</title>
        <authorList>
            <person name="Guerry P."/>
            <person name="Alm R.A."/>
            <person name="Power M.E."/>
            <person name="Logan S.M."/>
            <person name="Trust T.J."/>
        </authorList>
    </citation>
    <scope>NUCLEOTIDE SEQUENCE [GENOMIC DNA]</scope>
    <source>
        <strain>VC167 T2</strain>
    </source>
</reference>
<reference key="2">
    <citation type="journal article" date="1990" name="J. Bacteriol.">
        <title>Genomic organization and expression of Campylobacter flagellin genes.</title>
        <authorList>
            <person name="Guerry P."/>
            <person name="Logan S.M."/>
            <person name="Thornton S."/>
            <person name="Trust T.J."/>
        </authorList>
    </citation>
    <scope>NUCLEOTIDE SEQUENCE [GENOMIC DNA]</scope>
</reference>
<keyword id="KW-0975">Bacterial flagellum</keyword>
<keyword id="KW-0964">Secreted</keyword>
<proteinExistence type="inferred from homology"/>
<evidence type="ECO:0000250" key="1"/>
<evidence type="ECO:0000305" key="2"/>